<comment type="function">
    <text evidence="1">Bifunctional enzyme with both catalase and broad-spectrum peroxidase activity.</text>
</comment>
<comment type="catalytic activity">
    <reaction evidence="1">
        <text>H2O2 + AH2 = A + 2 H2O</text>
        <dbReference type="Rhea" id="RHEA:30275"/>
        <dbReference type="ChEBI" id="CHEBI:13193"/>
        <dbReference type="ChEBI" id="CHEBI:15377"/>
        <dbReference type="ChEBI" id="CHEBI:16240"/>
        <dbReference type="ChEBI" id="CHEBI:17499"/>
        <dbReference type="EC" id="1.11.1.21"/>
    </reaction>
</comment>
<comment type="catalytic activity">
    <reaction evidence="1">
        <text>2 H2O2 = O2 + 2 H2O</text>
        <dbReference type="Rhea" id="RHEA:20309"/>
        <dbReference type="ChEBI" id="CHEBI:15377"/>
        <dbReference type="ChEBI" id="CHEBI:15379"/>
        <dbReference type="ChEBI" id="CHEBI:16240"/>
        <dbReference type="EC" id="1.11.1.21"/>
    </reaction>
</comment>
<comment type="cofactor">
    <cofactor evidence="1">
        <name>heme b</name>
        <dbReference type="ChEBI" id="CHEBI:60344"/>
    </cofactor>
    <text evidence="1">Binds 1 heme b (iron(II)-protoporphyrin IX) group per dimer.</text>
</comment>
<comment type="subunit">
    <text evidence="1">Homodimer or homotetramer.</text>
</comment>
<comment type="PTM">
    <text evidence="1">Formation of the three residue Trp-Tyr-Met cross-link is important for the catalase, but not the peroxidase activity of the enzyme.</text>
</comment>
<comment type="similarity">
    <text evidence="1">Belongs to the peroxidase family. Peroxidase/catalase subfamily.</text>
</comment>
<keyword id="KW-0349">Heme</keyword>
<keyword id="KW-0376">Hydrogen peroxide</keyword>
<keyword id="KW-0408">Iron</keyword>
<keyword id="KW-0479">Metal-binding</keyword>
<keyword id="KW-0560">Oxidoreductase</keyword>
<keyword id="KW-0575">Peroxidase</keyword>
<keyword id="KW-0732">Signal</keyword>
<proteinExistence type="inferred from homology"/>
<reference key="1">
    <citation type="submission" date="2006-09" db="EMBL/GenBank/DDBJ databases">
        <title>Complete sequence of chromosome 1 of Shewanella sp. ANA-3.</title>
        <authorList>
            <person name="Copeland A."/>
            <person name="Lucas S."/>
            <person name="Lapidus A."/>
            <person name="Barry K."/>
            <person name="Detter J.C."/>
            <person name="Glavina del Rio T."/>
            <person name="Hammon N."/>
            <person name="Israni S."/>
            <person name="Dalin E."/>
            <person name="Tice H."/>
            <person name="Pitluck S."/>
            <person name="Chertkov O."/>
            <person name="Brettin T."/>
            <person name="Bruce D."/>
            <person name="Han C."/>
            <person name="Tapia R."/>
            <person name="Gilna P."/>
            <person name="Schmutz J."/>
            <person name="Larimer F."/>
            <person name="Land M."/>
            <person name="Hauser L."/>
            <person name="Kyrpides N."/>
            <person name="Kim E."/>
            <person name="Newman D."/>
            <person name="Salticov C."/>
            <person name="Konstantinidis K."/>
            <person name="Klappenback J."/>
            <person name="Tiedje J."/>
            <person name="Richardson P."/>
        </authorList>
    </citation>
    <scope>NUCLEOTIDE SEQUENCE [LARGE SCALE GENOMIC DNA]</scope>
    <source>
        <strain>ANA-3</strain>
    </source>
</reference>
<evidence type="ECO:0000255" key="1">
    <source>
        <dbReference type="HAMAP-Rule" id="MF_01961"/>
    </source>
</evidence>
<feature type="signal peptide" evidence="1">
    <location>
        <begin position="1"/>
        <end position="26"/>
    </location>
</feature>
<feature type="chain" id="PRO_0000354924" description="Catalase-peroxidase 2">
    <location>
        <begin position="27"/>
        <end position="739"/>
    </location>
</feature>
<feature type="active site" description="Proton acceptor" evidence="1">
    <location>
        <position position="106"/>
    </location>
</feature>
<feature type="binding site" description="axial binding residue" evidence="1">
    <location>
        <position position="268"/>
    </location>
    <ligand>
        <name>heme b</name>
        <dbReference type="ChEBI" id="CHEBI:60344"/>
    </ligand>
    <ligandPart>
        <name>Fe</name>
        <dbReference type="ChEBI" id="CHEBI:18248"/>
    </ligandPart>
</feature>
<feature type="site" description="Transition state stabilizer" evidence="1">
    <location>
        <position position="102"/>
    </location>
</feature>
<feature type="cross-link" description="Tryptophyl-tyrosyl-methioninium (Trp-Tyr) (with M-253)" evidence="1">
    <location>
        <begin position="105"/>
        <end position="227"/>
    </location>
</feature>
<feature type="cross-link" description="Tryptophyl-tyrosyl-methioninium (Tyr-Met) (with W-105)" evidence="1">
    <location>
        <begin position="227"/>
        <end position="253"/>
    </location>
</feature>
<protein>
    <recommendedName>
        <fullName evidence="1">Catalase-peroxidase 2</fullName>
        <shortName evidence="1">CP 2</shortName>
        <ecNumber evidence="1">1.11.1.21</ecNumber>
    </recommendedName>
    <alternativeName>
        <fullName evidence="1">Peroxidase/catalase 2</fullName>
    </alternativeName>
</protein>
<accession>A0L153</accession>
<sequence length="739" mass="81073">MKKSTIPSMSALTLAMSLAFGGAAIAQEQVTGNQFWWPEQLNLSPLRQNAVESNPYGSDYHYAEAFKSLDLDAVKKDIKALMTESQDWWPSDYGHYGPFFIRMAWHSAGVYRIFDGRGGAAGGQQRFEPLNSWPDNVNLDKARRLLWPIKQKYGSKISWGDLMVLTGNVALESMGFKTFGFAGGRVDDWEAEQVNWGSEKAWLDSKRRNEKGELAKPMGATQMGLIYVNPEGPNGVPDPLASAKEIRDTFGRMAMNDEETVALIAGGHTFGKAHGAHDPSKCVGADPAASGVEAQGLGWKNKCGKGHSEDTVTSGLEGAWSVNPTAWTMQYLENLYGFDWVQTKSPAGHIQWIPKDGKGANLVPDAHDKSKRHAPIMFTSDIALKEDPSYREITTRFLKNPKEFELAFAKAWFKLTHRDMGPKARYLGADVPAEMLIWQDPIPALDHPVIDNADIKALGNKILASGLTVPELVRTAWASASSFRGTDMRGGANGARIRLEPMMNWQANNPKELAKVLAKLEKVQKDVNSSLKGGKKVSLADVIVLGGSVAVEKAAKEAGVTVSVPFTPGRMDATQAQTDVSSFAVLEPTADGFRNYYSKDSSHSPAEMLIERANMLNLTVPEMTVLVGGLRALDANSAGVKHGVFTDKPGTLSNDFFVNLLDMSTKWSKSEKQEGIYEGQDRKSGKLKWTATPVDLVFGSHSELRAVSEVYGAQDGQDRFVQDFIKAWNKVMNADRFDI</sequence>
<organism>
    <name type="scientific">Shewanella sp. (strain ANA-3)</name>
    <dbReference type="NCBI Taxonomy" id="94122"/>
    <lineage>
        <taxon>Bacteria</taxon>
        <taxon>Pseudomonadati</taxon>
        <taxon>Pseudomonadota</taxon>
        <taxon>Gammaproteobacteria</taxon>
        <taxon>Alteromonadales</taxon>
        <taxon>Shewanellaceae</taxon>
        <taxon>Shewanella</taxon>
    </lineage>
</organism>
<dbReference type="EC" id="1.11.1.21" evidence="1"/>
<dbReference type="EMBL" id="CP000469">
    <property type="protein sequence ID" value="ABK49772.1"/>
    <property type="molecule type" value="Genomic_DNA"/>
</dbReference>
<dbReference type="RefSeq" id="WP_011718332.1">
    <property type="nucleotide sequence ID" value="NC_008577.1"/>
</dbReference>
<dbReference type="SMR" id="A0L153"/>
<dbReference type="STRING" id="94122.Shewana3_3549"/>
<dbReference type="PeroxiBase" id="3620">
    <property type="entry name" value="SHspCP02_ANA-3"/>
</dbReference>
<dbReference type="KEGG" id="shn:Shewana3_3549"/>
<dbReference type="eggNOG" id="COG0376">
    <property type="taxonomic scope" value="Bacteria"/>
</dbReference>
<dbReference type="HOGENOM" id="CLU_025424_2_0_6"/>
<dbReference type="OrthoDB" id="9759743at2"/>
<dbReference type="Proteomes" id="UP000002589">
    <property type="component" value="Chromosome"/>
</dbReference>
<dbReference type="GO" id="GO:0005829">
    <property type="term" value="C:cytosol"/>
    <property type="evidence" value="ECO:0007669"/>
    <property type="project" value="TreeGrafter"/>
</dbReference>
<dbReference type="GO" id="GO:0004096">
    <property type="term" value="F:catalase activity"/>
    <property type="evidence" value="ECO:0007669"/>
    <property type="project" value="UniProtKB-UniRule"/>
</dbReference>
<dbReference type="GO" id="GO:0020037">
    <property type="term" value="F:heme binding"/>
    <property type="evidence" value="ECO:0007669"/>
    <property type="project" value="InterPro"/>
</dbReference>
<dbReference type="GO" id="GO:0046872">
    <property type="term" value="F:metal ion binding"/>
    <property type="evidence" value="ECO:0007669"/>
    <property type="project" value="UniProtKB-KW"/>
</dbReference>
<dbReference type="GO" id="GO:0070301">
    <property type="term" value="P:cellular response to hydrogen peroxide"/>
    <property type="evidence" value="ECO:0007669"/>
    <property type="project" value="TreeGrafter"/>
</dbReference>
<dbReference type="GO" id="GO:0042744">
    <property type="term" value="P:hydrogen peroxide catabolic process"/>
    <property type="evidence" value="ECO:0007669"/>
    <property type="project" value="UniProtKB-KW"/>
</dbReference>
<dbReference type="CDD" id="cd00649">
    <property type="entry name" value="catalase_peroxidase_1"/>
    <property type="match status" value="1"/>
</dbReference>
<dbReference type="CDD" id="cd08200">
    <property type="entry name" value="catalase_peroxidase_2"/>
    <property type="match status" value="1"/>
</dbReference>
<dbReference type="FunFam" id="1.10.420.10:FF:000002">
    <property type="entry name" value="Catalase-peroxidase"/>
    <property type="match status" value="1"/>
</dbReference>
<dbReference type="FunFam" id="1.10.420.10:FF:000004">
    <property type="entry name" value="Catalase-peroxidase"/>
    <property type="match status" value="1"/>
</dbReference>
<dbReference type="FunFam" id="1.10.520.10:FF:000002">
    <property type="entry name" value="Catalase-peroxidase"/>
    <property type="match status" value="1"/>
</dbReference>
<dbReference type="Gene3D" id="1.10.520.10">
    <property type="match status" value="2"/>
</dbReference>
<dbReference type="Gene3D" id="1.10.420.10">
    <property type="entry name" value="Peroxidase, domain 2"/>
    <property type="match status" value="2"/>
</dbReference>
<dbReference type="HAMAP" id="MF_01961">
    <property type="entry name" value="Catal_peroxid"/>
    <property type="match status" value="1"/>
</dbReference>
<dbReference type="InterPro" id="IPR000763">
    <property type="entry name" value="Catalase_peroxidase"/>
</dbReference>
<dbReference type="InterPro" id="IPR002016">
    <property type="entry name" value="Haem_peroxidase"/>
</dbReference>
<dbReference type="InterPro" id="IPR010255">
    <property type="entry name" value="Haem_peroxidase_sf"/>
</dbReference>
<dbReference type="InterPro" id="IPR019794">
    <property type="entry name" value="Peroxidases_AS"/>
</dbReference>
<dbReference type="InterPro" id="IPR019793">
    <property type="entry name" value="Peroxidases_heam-ligand_BS"/>
</dbReference>
<dbReference type="NCBIfam" id="TIGR00198">
    <property type="entry name" value="cat_per_HPI"/>
    <property type="match status" value="1"/>
</dbReference>
<dbReference type="NCBIfam" id="NF011635">
    <property type="entry name" value="PRK15061.1"/>
    <property type="match status" value="1"/>
</dbReference>
<dbReference type="PANTHER" id="PTHR30555:SF0">
    <property type="entry name" value="CATALASE-PEROXIDASE"/>
    <property type="match status" value="1"/>
</dbReference>
<dbReference type="PANTHER" id="PTHR30555">
    <property type="entry name" value="HYDROPEROXIDASE I, BIFUNCTIONAL CATALASE-PEROXIDASE"/>
    <property type="match status" value="1"/>
</dbReference>
<dbReference type="Pfam" id="PF00141">
    <property type="entry name" value="peroxidase"/>
    <property type="match status" value="2"/>
</dbReference>
<dbReference type="PRINTS" id="PR00460">
    <property type="entry name" value="BPEROXIDASE"/>
</dbReference>
<dbReference type="PRINTS" id="PR00458">
    <property type="entry name" value="PEROXIDASE"/>
</dbReference>
<dbReference type="SUPFAM" id="SSF48113">
    <property type="entry name" value="Heme-dependent peroxidases"/>
    <property type="match status" value="2"/>
</dbReference>
<dbReference type="PROSITE" id="PS00435">
    <property type="entry name" value="PEROXIDASE_1"/>
    <property type="match status" value="1"/>
</dbReference>
<dbReference type="PROSITE" id="PS00436">
    <property type="entry name" value="PEROXIDASE_2"/>
    <property type="match status" value="1"/>
</dbReference>
<dbReference type="PROSITE" id="PS50873">
    <property type="entry name" value="PEROXIDASE_4"/>
    <property type="match status" value="1"/>
</dbReference>
<name>KATG2_SHESA</name>
<gene>
    <name evidence="1" type="primary">katG2</name>
    <name type="ordered locus">Shewana3_3549</name>
</gene>